<evidence type="ECO:0000255" key="1">
    <source>
        <dbReference type="HAMAP-Rule" id="MF_00221"/>
    </source>
</evidence>
<gene>
    <name evidence="1" type="primary">mntH</name>
    <name type="ordered locus">LCA_1699</name>
</gene>
<name>MNTH_LATSS</name>
<accession>Q38UX8</accession>
<sequence length="458" mass="50373">MDKKQREDSQKHEKFIHYADGSSLEEINNTVAIPKNAGFWKTLMAFMGPGALVAVGYMDPGNWITSIAGGAQFAYTLISVILVSNLIAMLLQAMAARLGIVTGMDLAQMTRAKTGKKMGIFLWIVTELAIMATDIAEIIGSAIALELIFNIPLLWGVLITAFDVLLLLLLMKLGFRKIEAIVATLVAVILFVFLYEVILAQPNMGDVVRGFVPSPRIMTDKKMLFLALGIVGATVMPHNLYLHSSIAQARQYDRDDVAEKRKAIKFTVIDSNIQLTIAFVVNCLLLILGAAMFYGTNSDLGRFVDLFNALQNKEIVGSIASPMLSLLFAVALLASGQNSTITGTLSGQIVMEGFVRMKIPLWARRVITRGLSILPVIIFTVYYHGNEAQVENLLIYSQVFLSIALPVSMIPLTLFTSDEKIMGPFVNRPWVKYTAWFVTIVLTLLNIYLILQTVGLAA</sequence>
<protein>
    <recommendedName>
        <fullName evidence="1">Divalent metal cation transporter MntH</fullName>
    </recommendedName>
</protein>
<comment type="function">
    <text evidence="1">H(+)-stimulated, divalent metal cation uptake system.</text>
</comment>
<comment type="subcellular location">
    <subcellularLocation>
        <location evidence="1">Cell membrane</location>
        <topology evidence="1">Multi-pass membrane protein</topology>
    </subcellularLocation>
</comment>
<comment type="similarity">
    <text evidence="1">Belongs to the NRAMP family.</text>
</comment>
<keyword id="KW-1003">Cell membrane</keyword>
<keyword id="KW-0406">Ion transport</keyword>
<keyword id="KW-0472">Membrane</keyword>
<keyword id="KW-1185">Reference proteome</keyword>
<keyword id="KW-0769">Symport</keyword>
<keyword id="KW-0812">Transmembrane</keyword>
<keyword id="KW-1133">Transmembrane helix</keyword>
<keyword id="KW-0813">Transport</keyword>
<organism>
    <name type="scientific">Latilactobacillus sakei subsp. sakei (strain 23K)</name>
    <name type="common">Lactobacillus sakei subsp. sakei</name>
    <dbReference type="NCBI Taxonomy" id="314315"/>
    <lineage>
        <taxon>Bacteria</taxon>
        <taxon>Bacillati</taxon>
        <taxon>Bacillota</taxon>
        <taxon>Bacilli</taxon>
        <taxon>Lactobacillales</taxon>
        <taxon>Lactobacillaceae</taxon>
        <taxon>Latilactobacillus</taxon>
    </lineage>
</organism>
<feature type="chain" id="PRO_0000325607" description="Divalent metal cation transporter MntH">
    <location>
        <begin position="1"/>
        <end position="458"/>
    </location>
</feature>
<feature type="transmembrane region" description="Helical" evidence="1">
    <location>
        <begin position="38"/>
        <end position="58"/>
    </location>
</feature>
<feature type="transmembrane region" description="Helical" evidence="1">
    <location>
        <begin position="86"/>
        <end position="106"/>
    </location>
</feature>
<feature type="transmembrane region" description="Helical" evidence="1">
    <location>
        <begin position="119"/>
        <end position="139"/>
    </location>
</feature>
<feature type="transmembrane region" description="Helical" evidence="1">
    <location>
        <begin position="151"/>
        <end position="171"/>
    </location>
</feature>
<feature type="transmembrane region" description="Helical" evidence="1">
    <location>
        <begin position="180"/>
        <end position="200"/>
    </location>
</feature>
<feature type="transmembrane region" description="Helical" evidence="1">
    <location>
        <begin position="223"/>
        <end position="243"/>
    </location>
</feature>
<feature type="transmembrane region" description="Helical" evidence="1">
    <location>
        <begin position="275"/>
        <end position="295"/>
    </location>
</feature>
<feature type="transmembrane region" description="Helical" evidence="1">
    <location>
        <begin position="315"/>
        <end position="335"/>
    </location>
</feature>
<feature type="transmembrane region" description="Helical" evidence="1">
    <location>
        <begin position="370"/>
        <end position="390"/>
    </location>
</feature>
<feature type="transmembrane region" description="Helical" evidence="1">
    <location>
        <begin position="395"/>
        <end position="415"/>
    </location>
</feature>
<feature type="transmembrane region" description="Helical" evidence="1">
    <location>
        <begin position="436"/>
        <end position="456"/>
    </location>
</feature>
<proteinExistence type="inferred from homology"/>
<reference key="1">
    <citation type="journal article" date="2005" name="Nat. Biotechnol.">
        <title>The complete genome sequence of the meat-borne lactic acid bacterium Lactobacillus sakei 23K.</title>
        <authorList>
            <person name="Chaillou S."/>
            <person name="Champomier-Verges M.-C."/>
            <person name="Cornet M."/>
            <person name="Crutz-Le Coq A.-M."/>
            <person name="Dudez A.-M."/>
            <person name="Martin V."/>
            <person name="Beaufils S."/>
            <person name="Darbon-Rongere E."/>
            <person name="Bossy R."/>
            <person name="Loux V."/>
            <person name="Zagorec M."/>
        </authorList>
    </citation>
    <scope>NUCLEOTIDE SEQUENCE [LARGE SCALE GENOMIC DNA]</scope>
    <source>
        <strain>23K</strain>
    </source>
</reference>
<dbReference type="EMBL" id="CR936503">
    <property type="protein sequence ID" value="CAI56006.1"/>
    <property type="molecule type" value="Genomic_DNA"/>
</dbReference>
<dbReference type="RefSeq" id="WP_011375389.1">
    <property type="nucleotide sequence ID" value="NC_007576.1"/>
</dbReference>
<dbReference type="SMR" id="Q38UX8"/>
<dbReference type="STRING" id="314315.LCA_1699"/>
<dbReference type="KEGG" id="lsa:LCA_1699"/>
<dbReference type="eggNOG" id="COG1914">
    <property type="taxonomic scope" value="Bacteria"/>
</dbReference>
<dbReference type="HOGENOM" id="CLU_020088_2_0_9"/>
<dbReference type="OrthoDB" id="9787548at2"/>
<dbReference type="Proteomes" id="UP000002707">
    <property type="component" value="Chromosome"/>
</dbReference>
<dbReference type="GO" id="GO:0005886">
    <property type="term" value="C:plasma membrane"/>
    <property type="evidence" value="ECO:0007669"/>
    <property type="project" value="UniProtKB-SubCell"/>
</dbReference>
<dbReference type="GO" id="GO:0015086">
    <property type="term" value="F:cadmium ion transmembrane transporter activity"/>
    <property type="evidence" value="ECO:0007669"/>
    <property type="project" value="TreeGrafter"/>
</dbReference>
<dbReference type="GO" id="GO:0005384">
    <property type="term" value="F:manganese ion transmembrane transporter activity"/>
    <property type="evidence" value="ECO:0007669"/>
    <property type="project" value="TreeGrafter"/>
</dbReference>
<dbReference type="GO" id="GO:0046872">
    <property type="term" value="F:metal ion binding"/>
    <property type="evidence" value="ECO:0007669"/>
    <property type="project" value="UniProtKB-UniRule"/>
</dbReference>
<dbReference type="GO" id="GO:0015293">
    <property type="term" value="F:symporter activity"/>
    <property type="evidence" value="ECO:0007669"/>
    <property type="project" value="UniProtKB-UniRule"/>
</dbReference>
<dbReference type="GO" id="GO:0034755">
    <property type="term" value="P:iron ion transmembrane transport"/>
    <property type="evidence" value="ECO:0007669"/>
    <property type="project" value="TreeGrafter"/>
</dbReference>
<dbReference type="HAMAP" id="MF_00221">
    <property type="entry name" value="NRAMP"/>
    <property type="match status" value="1"/>
</dbReference>
<dbReference type="InterPro" id="IPR001046">
    <property type="entry name" value="NRAMP_fam"/>
</dbReference>
<dbReference type="NCBIfam" id="TIGR01197">
    <property type="entry name" value="nramp"/>
    <property type="match status" value="1"/>
</dbReference>
<dbReference type="NCBIfam" id="NF037982">
    <property type="entry name" value="Nramp_1"/>
    <property type="match status" value="1"/>
</dbReference>
<dbReference type="NCBIfam" id="NF001923">
    <property type="entry name" value="PRK00701.1"/>
    <property type="match status" value="1"/>
</dbReference>
<dbReference type="PANTHER" id="PTHR11706:SF33">
    <property type="entry name" value="NATURAL RESISTANCE-ASSOCIATED MACROPHAGE PROTEIN 2"/>
    <property type="match status" value="1"/>
</dbReference>
<dbReference type="PANTHER" id="PTHR11706">
    <property type="entry name" value="SOLUTE CARRIER PROTEIN FAMILY 11 MEMBER"/>
    <property type="match status" value="1"/>
</dbReference>
<dbReference type="Pfam" id="PF01566">
    <property type="entry name" value="Nramp"/>
    <property type="match status" value="1"/>
</dbReference>
<dbReference type="PRINTS" id="PR00447">
    <property type="entry name" value="NATRESASSCMP"/>
</dbReference>